<name>RF3_ECO5E</name>
<gene>
    <name evidence="1" type="primary">prfC</name>
    <name type="ordered locus">ECH74115_5887</name>
</gene>
<organism>
    <name type="scientific">Escherichia coli O157:H7 (strain EC4115 / EHEC)</name>
    <dbReference type="NCBI Taxonomy" id="444450"/>
    <lineage>
        <taxon>Bacteria</taxon>
        <taxon>Pseudomonadati</taxon>
        <taxon>Pseudomonadota</taxon>
        <taxon>Gammaproteobacteria</taxon>
        <taxon>Enterobacterales</taxon>
        <taxon>Enterobacteriaceae</taxon>
        <taxon>Escherichia</taxon>
    </lineage>
</organism>
<sequence length="529" mass="59574">MTLSPYLQEVAKRRTFAIISHPDAGKTTITEKVLLFGQAIQTAGTVKGRGSNQHAKSDWMEMEKQRGISITTSVMQFPYHDCLVNLLDTPGHEDFSEDTYRTLTAVDCCLMVIDAAKGVEDRTRKLMEVTRLRDTPILTFMNKLDRDIRDPMELLDEVENELKIGCAPITWPIGCGKLFKGVYHLYKDETYLYQSGKGHTIQEVRIVKGLNNPDLDAAVGEDLAQQLRDELELVKGASNEFDKELFLAGEITPVFFGTALGNFGVDHMLDGLVEWAPAPMPRQTDTRTVEASEDKFTGFVFKIQANMDPKHRDRVAFMRVVSGKYEKGMKLRQVRTAKDVVISDALTFMAGDRSHVEEAYPGDILGLHNHGTIQIGDTFTQGEMMKFTGIPNFAPELFRRIRLKDPLKQKQLLKGLVQLSEEGAVQVFRPISNNDLIVGAVGVLQFDVVVARLKSEYNVEAVYESVNVATARWVECADAKKFEEFKRKNESQLALDGGDNLAYIATSMVNLRLAQERYPDVQFHQTREH</sequence>
<protein>
    <recommendedName>
        <fullName evidence="1">Peptide chain release factor 3</fullName>
        <shortName evidence="1">RF-3</shortName>
    </recommendedName>
</protein>
<keyword id="KW-0963">Cytoplasm</keyword>
<keyword id="KW-0342">GTP-binding</keyword>
<keyword id="KW-0547">Nucleotide-binding</keyword>
<keyword id="KW-0648">Protein biosynthesis</keyword>
<accession>B5Z4Q6</accession>
<evidence type="ECO:0000255" key="1">
    <source>
        <dbReference type="HAMAP-Rule" id="MF_00072"/>
    </source>
</evidence>
<comment type="function">
    <text evidence="1">Increases the formation of ribosomal termination complexes and stimulates activities of RF-1 and RF-2. It binds guanine nucleotides and has strong preference for UGA stop codons. It may interact directly with the ribosome. The stimulation of RF-1 and RF-2 is significantly reduced by GTP and GDP, but not by GMP.</text>
</comment>
<comment type="subcellular location">
    <subcellularLocation>
        <location evidence="1">Cytoplasm</location>
    </subcellularLocation>
</comment>
<comment type="similarity">
    <text evidence="1">Belongs to the TRAFAC class translation factor GTPase superfamily. Classic translation factor GTPase family. PrfC subfamily.</text>
</comment>
<dbReference type="EMBL" id="CP001164">
    <property type="protein sequence ID" value="ACI37894.1"/>
    <property type="molecule type" value="Genomic_DNA"/>
</dbReference>
<dbReference type="RefSeq" id="WP_000175940.1">
    <property type="nucleotide sequence ID" value="NC_011353.1"/>
</dbReference>
<dbReference type="SMR" id="B5Z4Q6"/>
<dbReference type="KEGG" id="ecf:ECH74115_5887"/>
<dbReference type="HOGENOM" id="CLU_002794_2_1_6"/>
<dbReference type="GO" id="GO:0005829">
    <property type="term" value="C:cytosol"/>
    <property type="evidence" value="ECO:0007669"/>
    <property type="project" value="TreeGrafter"/>
</dbReference>
<dbReference type="GO" id="GO:0005525">
    <property type="term" value="F:GTP binding"/>
    <property type="evidence" value="ECO:0007669"/>
    <property type="project" value="UniProtKB-UniRule"/>
</dbReference>
<dbReference type="GO" id="GO:0003924">
    <property type="term" value="F:GTPase activity"/>
    <property type="evidence" value="ECO:0007669"/>
    <property type="project" value="InterPro"/>
</dbReference>
<dbReference type="GO" id="GO:0097216">
    <property type="term" value="F:guanosine tetraphosphate binding"/>
    <property type="evidence" value="ECO:0007669"/>
    <property type="project" value="UniProtKB-ARBA"/>
</dbReference>
<dbReference type="GO" id="GO:0016150">
    <property type="term" value="F:translation release factor activity, codon nonspecific"/>
    <property type="evidence" value="ECO:0007669"/>
    <property type="project" value="TreeGrafter"/>
</dbReference>
<dbReference type="GO" id="GO:0016149">
    <property type="term" value="F:translation release factor activity, codon specific"/>
    <property type="evidence" value="ECO:0007669"/>
    <property type="project" value="UniProtKB-UniRule"/>
</dbReference>
<dbReference type="GO" id="GO:0006449">
    <property type="term" value="P:regulation of translational termination"/>
    <property type="evidence" value="ECO:0007669"/>
    <property type="project" value="UniProtKB-UniRule"/>
</dbReference>
<dbReference type="CDD" id="cd04169">
    <property type="entry name" value="RF3"/>
    <property type="match status" value="1"/>
</dbReference>
<dbReference type="CDD" id="cd03689">
    <property type="entry name" value="RF3_II"/>
    <property type="match status" value="1"/>
</dbReference>
<dbReference type="CDD" id="cd16259">
    <property type="entry name" value="RF3_III"/>
    <property type="match status" value="1"/>
</dbReference>
<dbReference type="FunFam" id="2.40.30.10:FF:000040">
    <property type="entry name" value="Peptide chain release factor 3"/>
    <property type="match status" value="1"/>
</dbReference>
<dbReference type="FunFam" id="3.30.70.3280:FF:000001">
    <property type="entry name" value="Peptide chain release factor 3"/>
    <property type="match status" value="1"/>
</dbReference>
<dbReference type="FunFam" id="3.40.50.300:FF:000184">
    <property type="entry name" value="Peptide chain release factor 3"/>
    <property type="match status" value="1"/>
</dbReference>
<dbReference type="FunFam" id="3.40.50.300:FF:000253">
    <property type="entry name" value="Peptide chain release factor 3"/>
    <property type="match status" value="1"/>
</dbReference>
<dbReference type="Gene3D" id="3.40.50.300">
    <property type="entry name" value="P-loop containing nucleotide triphosphate hydrolases"/>
    <property type="match status" value="3"/>
</dbReference>
<dbReference type="Gene3D" id="3.30.70.3280">
    <property type="entry name" value="Peptide chain release factor 3, domain III"/>
    <property type="match status" value="1"/>
</dbReference>
<dbReference type="HAMAP" id="MF_00072">
    <property type="entry name" value="Rel_fac_3"/>
    <property type="match status" value="1"/>
</dbReference>
<dbReference type="InterPro" id="IPR053905">
    <property type="entry name" value="EF-G-like_DII"/>
</dbReference>
<dbReference type="InterPro" id="IPR035647">
    <property type="entry name" value="EFG_III/V"/>
</dbReference>
<dbReference type="InterPro" id="IPR031157">
    <property type="entry name" value="G_TR_CS"/>
</dbReference>
<dbReference type="InterPro" id="IPR027417">
    <property type="entry name" value="P-loop_NTPase"/>
</dbReference>
<dbReference type="InterPro" id="IPR004548">
    <property type="entry name" value="PrfC"/>
</dbReference>
<dbReference type="InterPro" id="IPR032090">
    <property type="entry name" value="RF3_C"/>
</dbReference>
<dbReference type="InterPro" id="IPR038467">
    <property type="entry name" value="RF3_dom_3_sf"/>
</dbReference>
<dbReference type="InterPro" id="IPR041732">
    <property type="entry name" value="RF3_GTP-bd"/>
</dbReference>
<dbReference type="InterPro" id="IPR005225">
    <property type="entry name" value="Small_GTP-bd"/>
</dbReference>
<dbReference type="InterPro" id="IPR000795">
    <property type="entry name" value="T_Tr_GTP-bd_dom"/>
</dbReference>
<dbReference type="InterPro" id="IPR009000">
    <property type="entry name" value="Transl_B-barrel_sf"/>
</dbReference>
<dbReference type="NCBIfam" id="TIGR00503">
    <property type="entry name" value="prfC"/>
    <property type="match status" value="1"/>
</dbReference>
<dbReference type="NCBIfam" id="NF001964">
    <property type="entry name" value="PRK00741.1"/>
    <property type="match status" value="1"/>
</dbReference>
<dbReference type="NCBIfam" id="TIGR00231">
    <property type="entry name" value="small_GTP"/>
    <property type="match status" value="1"/>
</dbReference>
<dbReference type="PANTHER" id="PTHR43556">
    <property type="entry name" value="PEPTIDE CHAIN RELEASE FACTOR RF3"/>
    <property type="match status" value="1"/>
</dbReference>
<dbReference type="PANTHER" id="PTHR43556:SF2">
    <property type="entry name" value="PEPTIDE CHAIN RELEASE FACTOR RF3"/>
    <property type="match status" value="1"/>
</dbReference>
<dbReference type="Pfam" id="PF22042">
    <property type="entry name" value="EF-G_D2"/>
    <property type="match status" value="1"/>
</dbReference>
<dbReference type="Pfam" id="PF00009">
    <property type="entry name" value="GTP_EFTU"/>
    <property type="match status" value="1"/>
</dbReference>
<dbReference type="Pfam" id="PF16658">
    <property type="entry name" value="RF3_C"/>
    <property type="match status" value="1"/>
</dbReference>
<dbReference type="PRINTS" id="PR00315">
    <property type="entry name" value="ELONGATNFCT"/>
</dbReference>
<dbReference type="SUPFAM" id="SSF54980">
    <property type="entry name" value="EF-G C-terminal domain-like"/>
    <property type="match status" value="1"/>
</dbReference>
<dbReference type="SUPFAM" id="SSF52540">
    <property type="entry name" value="P-loop containing nucleoside triphosphate hydrolases"/>
    <property type="match status" value="1"/>
</dbReference>
<dbReference type="SUPFAM" id="SSF50447">
    <property type="entry name" value="Translation proteins"/>
    <property type="match status" value="1"/>
</dbReference>
<dbReference type="PROSITE" id="PS00301">
    <property type="entry name" value="G_TR_1"/>
    <property type="match status" value="1"/>
</dbReference>
<dbReference type="PROSITE" id="PS51722">
    <property type="entry name" value="G_TR_2"/>
    <property type="match status" value="1"/>
</dbReference>
<reference key="1">
    <citation type="journal article" date="2011" name="Proc. Natl. Acad. Sci. U.S.A.">
        <title>Genomic anatomy of Escherichia coli O157:H7 outbreaks.</title>
        <authorList>
            <person name="Eppinger M."/>
            <person name="Mammel M.K."/>
            <person name="Leclerc J.E."/>
            <person name="Ravel J."/>
            <person name="Cebula T.A."/>
        </authorList>
    </citation>
    <scope>NUCLEOTIDE SEQUENCE [LARGE SCALE GENOMIC DNA]</scope>
    <source>
        <strain>EC4115 / EHEC</strain>
    </source>
</reference>
<feature type="chain" id="PRO_1000092481" description="Peptide chain release factor 3">
    <location>
        <begin position="1"/>
        <end position="529"/>
    </location>
</feature>
<feature type="domain" description="tr-type G">
    <location>
        <begin position="11"/>
        <end position="280"/>
    </location>
</feature>
<feature type="binding site" evidence="1">
    <location>
        <begin position="20"/>
        <end position="27"/>
    </location>
    <ligand>
        <name>GTP</name>
        <dbReference type="ChEBI" id="CHEBI:37565"/>
    </ligand>
</feature>
<feature type="binding site" evidence="1">
    <location>
        <begin position="88"/>
        <end position="92"/>
    </location>
    <ligand>
        <name>GTP</name>
        <dbReference type="ChEBI" id="CHEBI:37565"/>
    </ligand>
</feature>
<feature type="binding site" evidence="1">
    <location>
        <begin position="142"/>
        <end position="145"/>
    </location>
    <ligand>
        <name>GTP</name>
        <dbReference type="ChEBI" id="CHEBI:37565"/>
    </ligand>
</feature>
<proteinExistence type="inferred from homology"/>